<feature type="chain" id="PRO_0000350219" description="Probable dual-specificity RNA methyltransferase RlmN">
    <location>
        <begin position="1"/>
        <end position="391"/>
    </location>
</feature>
<feature type="domain" description="Radical SAM core" evidence="2">
    <location>
        <begin position="130"/>
        <end position="373"/>
    </location>
</feature>
<feature type="region of interest" description="Disordered" evidence="3">
    <location>
        <begin position="1"/>
        <end position="33"/>
    </location>
</feature>
<feature type="compositionally biased region" description="Low complexity" evidence="3">
    <location>
        <begin position="12"/>
        <end position="21"/>
    </location>
</feature>
<feature type="active site" description="Proton acceptor" evidence="1">
    <location>
        <position position="124"/>
    </location>
</feature>
<feature type="active site" description="S-methylcysteine intermediate" evidence="1">
    <location>
        <position position="378"/>
    </location>
</feature>
<feature type="binding site" evidence="1">
    <location>
        <position position="144"/>
    </location>
    <ligand>
        <name>[4Fe-4S] cluster</name>
        <dbReference type="ChEBI" id="CHEBI:49883"/>
        <note>4Fe-4S-S-AdoMet</note>
    </ligand>
</feature>
<feature type="binding site" evidence="1">
    <location>
        <position position="148"/>
    </location>
    <ligand>
        <name>[4Fe-4S] cluster</name>
        <dbReference type="ChEBI" id="CHEBI:49883"/>
        <note>4Fe-4S-S-AdoMet</note>
    </ligand>
</feature>
<feature type="binding site" evidence="1">
    <location>
        <position position="151"/>
    </location>
    <ligand>
        <name>[4Fe-4S] cluster</name>
        <dbReference type="ChEBI" id="CHEBI:49883"/>
        <note>4Fe-4S-S-AdoMet</note>
    </ligand>
</feature>
<feature type="binding site" evidence="1">
    <location>
        <begin position="199"/>
        <end position="200"/>
    </location>
    <ligand>
        <name>S-adenosyl-L-methionine</name>
        <dbReference type="ChEBI" id="CHEBI:59789"/>
    </ligand>
</feature>
<feature type="binding site" evidence="1">
    <location>
        <position position="233"/>
    </location>
    <ligand>
        <name>S-adenosyl-L-methionine</name>
        <dbReference type="ChEBI" id="CHEBI:59789"/>
    </ligand>
</feature>
<feature type="binding site" evidence="1">
    <location>
        <begin position="256"/>
        <end position="258"/>
    </location>
    <ligand>
        <name>S-adenosyl-L-methionine</name>
        <dbReference type="ChEBI" id="CHEBI:59789"/>
    </ligand>
</feature>
<feature type="binding site" evidence="1">
    <location>
        <position position="335"/>
    </location>
    <ligand>
        <name>S-adenosyl-L-methionine</name>
        <dbReference type="ChEBI" id="CHEBI:59789"/>
    </ligand>
</feature>
<feature type="disulfide bond" description="(transient)" evidence="1">
    <location>
        <begin position="137"/>
        <end position="378"/>
    </location>
</feature>
<keyword id="KW-0004">4Fe-4S</keyword>
<keyword id="KW-0963">Cytoplasm</keyword>
<keyword id="KW-1015">Disulfide bond</keyword>
<keyword id="KW-0408">Iron</keyword>
<keyword id="KW-0411">Iron-sulfur</keyword>
<keyword id="KW-0479">Metal-binding</keyword>
<keyword id="KW-0489">Methyltransferase</keyword>
<keyword id="KW-1185">Reference proteome</keyword>
<keyword id="KW-0698">rRNA processing</keyword>
<keyword id="KW-0949">S-adenosyl-L-methionine</keyword>
<keyword id="KW-0808">Transferase</keyword>
<keyword id="KW-0819">tRNA processing</keyword>
<comment type="function">
    <text evidence="1">Specifically methylates position 2 of adenine 2503 in 23S rRNA and position 2 of adenine 37 in tRNAs.</text>
</comment>
<comment type="catalytic activity">
    <reaction evidence="1">
        <text>adenosine(2503) in 23S rRNA + 2 reduced [2Fe-2S]-[ferredoxin] + 2 S-adenosyl-L-methionine = 2-methyladenosine(2503) in 23S rRNA + 5'-deoxyadenosine + L-methionine + 2 oxidized [2Fe-2S]-[ferredoxin] + S-adenosyl-L-homocysteine</text>
        <dbReference type="Rhea" id="RHEA:42916"/>
        <dbReference type="Rhea" id="RHEA-COMP:10000"/>
        <dbReference type="Rhea" id="RHEA-COMP:10001"/>
        <dbReference type="Rhea" id="RHEA-COMP:10152"/>
        <dbReference type="Rhea" id="RHEA-COMP:10282"/>
        <dbReference type="ChEBI" id="CHEBI:17319"/>
        <dbReference type="ChEBI" id="CHEBI:33737"/>
        <dbReference type="ChEBI" id="CHEBI:33738"/>
        <dbReference type="ChEBI" id="CHEBI:57844"/>
        <dbReference type="ChEBI" id="CHEBI:57856"/>
        <dbReference type="ChEBI" id="CHEBI:59789"/>
        <dbReference type="ChEBI" id="CHEBI:74411"/>
        <dbReference type="ChEBI" id="CHEBI:74497"/>
        <dbReference type="EC" id="2.1.1.192"/>
    </reaction>
</comment>
<comment type="catalytic activity">
    <reaction evidence="1">
        <text>adenosine(37) in tRNA + 2 reduced [2Fe-2S]-[ferredoxin] + 2 S-adenosyl-L-methionine = 2-methyladenosine(37) in tRNA + 5'-deoxyadenosine + L-methionine + 2 oxidized [2Fe-2S]-[ferredoxin] + S-adenosyl-L-homocysteine</text>
        <dbReference type="Rhea" id="RHEA:43332"/>
        <dbReference type="Rhea" id="RHEA-COMP:10000"/>
        <dbReference type="Rhea" id="RHEA-COMP:10001"/>
        <dbReference type="Rhea" id="RHEA-COMP:10162"/>
        <dbReference type="Rhea" id="RHEA-COMP:10485"/>
        <dbReference type="ChEBI" id="CHEBI:17319"/>
        <dbReference type="ChEBI" id="CHEBI:33737"/>
        <dbReference type="ChEBI" id="CHEBI:33738"/>
        <dbReference type="ChEBI" id="CHEBI:57844"/>
        <dbReference type="ChEBI" id="CHEBI:57856"/>
        <dbReference type="ChEBI" id="CHEBI:59789"/>
        <dbReference type="ChEBI" id="CHEBI:74411"/>
        <dbReference type="ChEBI" id="CHEBI:74497"/>
        <dbReference type="EC" id="2.1.1.192"/>
    </reaction>
</comment>
<comment type="cofactor">
    <cofactor evidence="1">
        <name>[4Fe-4S] cluster</name>
        <dbReference type="ChEBI" id="CHEBI:49883"/>
    </cofactor>
    <text evidence="1">Binds 1 [4Fe-4S] cluster. The cluster is coordinated with 3 cysteines and an exchangeable S-adenosyl-L-methionine.</text>
</comment>
<comment type="subcellular location">
    <subcellularLocation>
        <location evidence="1">Cytoplasm</location>
    </subcellularLocation>
</comment>
<comment type="miscellaneous">
    <text evidence="1">Reaction proceeds by a ping-pong mechanism involving intermediate methylation of a conserved cysteine residue.</text>
</comment>
<comment type="similarity">
    <text evidence="1">Belongs to the radical SAM superfamily. RlmN family.</text>
</comment>
<reference key="1">
    <citation type="journal article" date="2008" name="PLoS ONE">
        <title>Survival in nuclear waste, extreme resistance, and potential applications gleaned from the genome sequence of Kineococcus radiotolerans SRS30216.</title>
        <authorList>
            <person name="Bagwell C.E."/>
            <person name="Bhat S."/>
            <person name="Hawkins G.M."/>
            <person name="Smith B.W."/>
            <person name="Biswas T."/>
            <person name="Hoover T.R."/>
            <person name="Saunders E."/>
            <person name="Han C.S."/>
            <person name="Tsodikov O.V."/>
            <person name="Shimkets L.J."/>
        </authorList>
    </citation>
    <scope>NUCLEOTIDE SEQUENCE [LARGE SCALE GENOMIC DNA]</scope>
    <source>
        <strain>ATCC BAA-149 / DSM 14245 / SRS30216</strain>
    </source>
</reference>
<proteinExistence type="inferred from homology"/>
<accession>A6W7W9</accession>
<gene>
    <name evidence="1" type="primary">rlmN</name>
    <name type="ordered locus">Krad_1420</name>
</gene>
<protein>
    <recommendedName>
        <fullName evidence="1">Probable dual-specificity RNA methyltransferase RlmN</fullName>
        <ecNumber evidence="1">2.1.1.192</ecNumber>
    </recommendedName>
    <alternativeName>
        <fullName evidence="1">23S rRNA (adenine(2503)-C(2))-methyltransferase</fullName>
    </alternativeName>
    <alternativeName>
        <fullName evidence="1">23S rRNA m2A2503 methyltransferase</fullName>
    </alternativeName>
    <alternativeName>
        <fullName evidence="1">Ribosomal RNA large subunit methyltransferase N</fullName>
    </alternativeName>
    <alternativeName>
        <fullName evidence="1">tRNA (adenine(37)-C(2))-methyltransferase</fullName>
    </alternativeName>
    <alternativeName>
        <fullName evidence="1">tRNA m2A37 methyltransferase</fullName>
    </alternativeName>
</protein>
<dbReference type="EC" id="2.1.1.192" evidence="1"/>
<dbReference type="EMBL" id="CP000750">
    <property type="protein sequence ID" value="ABS02908.1"/>
    <property type="molecule type" value="Genomic_DNA"/>
</dbReference>
<dbReference type="RefSeq" id="WP_011981953.1">
    <property type="nucleotide sequence ID" value="NC_009664.2"/>
</dbReference>
<dbReference type="SMR" id="A6W7W9"/>
<dbReference type="STRING" id="266940.Krad_1420"/>
<dbReference type="KEGG" id="kra:Krad_1420"/>
<dbReference type="eggNOG" id="COG0820">
    <property type="taxonomic scope" value="Bacteria"/>
</dbReference>
<dbReference type="HOGENOM" id="CLU_029101_0_2_11"/>
<dbReference type="OrthoDB" id="9793973at2"/>
<dbReference type="Proteomes" id="UP000001116">
    <property type="component" value="Chromosome"/>
</dbReference>
<dbReference type="GO" id="GO:0005737">
    <property type="term" value="C:cytoplasm"/>
    <property type="evidence" value="ECO:0007669"/>
    <property type="project" value="UniProtKB-SubCell"/>
</dbReference>
<dbReference type="GO" id="GO:0051539">
    <property type="term" value="F:4 iron, 4 sulfur cluster binding"/>
    <property type="evidence" value="ECO:0007669"/>
    <property type="project" value="UniProtKB-UniRule"/>
</dbReference>
<dbReference type="GO" id="GO:0046872">
    <property type="term" value="F:metal ion binding"/>
    <property type="evidence" value="ECO:0007669"/>
    <property type="project" value="UniProtKB-KW"/>
</dbReference>
<dbReference type="GO" id="GO:0070040">
    <property type="term" value="F:rRNA (adenine(2503)-C2-)-methyltransferase activity"/>
    <property type="evidence" value="ECO:0007669"/>
    <property type="project" value="UniProtKB-UniRule"/>
</dbReference>
<dbReference type="GO" id="GO:0019843">
    <property type="term" value="F:rRNA binding"/>
    <property type="evidence" value="ECO:0007669"/>
    <property type="project" value="UniProtKB-UniRule"/>
</dbReference>
<dbReference type="GO" id="GO:0002935">
    <property type="term" value="F:tRNA (adenine(37)-C2)-methyltransferase activity"/>
    <property type="evidence" value="ECO:0007669"/>
    <property type="project" value="UniProtKB-UniRule"/>
</dbReference>
<dbReference type="GO" id="GO:0000049">
    <property type="term" value="F:tRNA binding"/>
    <property type="evidence" value="ECO:0007669"/>
    <property type="project" value="UniProtKB-UniRule"/>
</dbReference>
<dbReference type="GO" id="GO:0070475">
    <property type="term" value="P:rRNA base methylation"/>
    <property type="evidence" value="ECO:0007669"/>
    <property type="project" value="UniProtKB-UniRule"/>
</dbReference>
<dbReference type="GO" id="GO:0030488">
    <property type="term" value="P:tRNA methylation"/>
    <property type="evidence" value="ECO:0007669"/>
    <property type="project" value="UniProtKB-UniRule"/>
</dbReference>
<dbReference type="CDD" id="cd01335">
    <property type="entry name" value="Radical_SAM"/>
    <property type="match status" value="1"/>
</dbReference>
<dbReference type="FunFam" id="3.20.20.70:FF:000014">
    <property type="entry name" value="Probable dual-specificity RNA methyltransferase RlmN"/>
    <property type="match status" value="1"/>
</dbReference>
<dbReference type="Gene3D" id="1.10.150.530">
    <property type="match status" value="1"/>
</dbReference>
<dbReference type="Gene3D" id="3.20.20.70">
    <property type="entry name" value="Aldolase class I"/>
    <property type="match status" value="1"/>
</dbReference>
<dbReference type="HAMAP" id="MF_01849">
    <property type="entry name" value="RNA_methyltr_RlmN"/>
    <property type="match status" value="1"/>
</dbReference>
<dbReference type="InterPro" id="IPR013785">
    <property type="entry name" value="Aldolase_TIM"/>
</dbReference>
<dbReference type="InterPro" id="IPR040072">
    <property type="entry name" value="Methyltransferase_A"/>
</dbReference>
<dbReference type="InterPro" id="IPR027492">
    <property type="entry name" value="RNA_MTrfase_RlmN"/>
</dbReference>
<dbReference type="InterPro" id="IPR004383">
    <property type="entry name" value="rRNA_lsu_MTrfase_RlmN/Cfr"/>
</dbReference>
<dbReference type="InterPro" id="IPR007197">
    <property type="entry name" value="rSAM"/>
</dbReference>
<dbReference type="NCBIfam" id="TIGR00048">
    <property type="entry name" value="rRNA_mod_RlmN"/>
    <property type="match status" value="1"/>
</dbReference>
<dbReference type="PANTHER" id="PTHR30544">
    <property type="entry name" value="23S RRNA METHYLTRANSFERASE"/>
    <property type="match status" value="1"/>
</dbReference>
<dbReference type="PANTHER" id="PTHR30544:SF5">
    <property type="entry name" value="RADICAL SAM CORE DOMAIN-CONTAINING PROTEIN"/>
    <property type="match status" value="1"/>
</dbReference>
<dbReference type="Pfam" id="PF04055">
    <property type="entry name" value="Radical_SAM"/>
    <property type="match status" value="1"/>
</dbReference>
<dbReference type="PIRSF" id="PIRSF006004">
    <property type="entry name" value="CHP00048"/>
    <property type="match status" value="1"/>
</dbReference>
<dbReference type="SFLD" id="SFLDF00275">
    <property type="entry name" value="adenosine_C2_methyltransferase"/>
    <property type="match status" value="1"/>
</dbReference>
<dbReference type="SFLD" id="SFLDS00029">
    <property type="entry name" value="Radical_SAM"/>
    <property type="match status" value="1"/>
</dbReference>
<dbReference type="SUPFAM" id="SSF102114">
    <property type="entry name" value="Radical SAM enzymes"/>
    <property type="match status" value="1"/>
</dbReference>
<dbReference type="PROSITE" id="PS51918">
    <property type="entry name" value="RADICAL_SAM"/>
    <property type="match status" value="1"/>
</dbReference>
<sequence>MTTPLDTPTREPLPLAPAGPGKLVMSAPRRGKPPRHFVDLEPAERGPAMVELGEKAFRGKQLATQWFERLEDDPARMTDLPAASRTRIAEALLPTLLTPIRTLTADGGTTIKSLYRLHDGALVESVLMRYKNRDTICISSQAGCGMNCPFCATGQAGLTRNLSTAEIVEQVTAASRALARDEVPGGPGRVSNVVFMGMGEALANYKSAVAAVRRLVSPAPDGLGISARGVTMSTVGLVPAIDKFAQEGIAATLALSLHAPDDELRDELVPINQRWKVGEALDAARRYFEATGRRVSIEYALIKDINDQAWRADRLGKLLNARGRGWVHVNPIPLNPTPGSKWTASDPAVERAFVAALENRGIPTTVRDTRGSDIDGACGQLAAIGPEQPRA</sequence>
<organism>
    <name type="scientific">Kineococcus radiotolerans (strain ATCC BAA-149 / DSM 14245 / SRS30216)</name>
    <dbReference type="NCBI Taxonomy" id="266940"/>
    <lineage>
        <taxon>Bacteria</taxon>
        <taxon>Bacillati</taxon>
        <taxon>Actinomycetota</taxon>
        <taxon>Actinomycetes</taxon>
        <taxon>Kineosporiales</taxon>
        <taxon>Kineosporiaceae</taxon>
        <taxon>Kineococcus</taxon>
    </lineage>
</organism>
<name>RLMN_KINRD</name>
<evidence type="ECO:0000255" key="1">
    <source>
        <dbReference type="HAMAP-Rule" id="MF_01849"/>
    </source>
</evidence>
<evidence type="ECO:0000255" key="2">
    <source>
        <dbReference type="PROSITE-ProRule" id="PRU01266"/>
    </source>
</evidence>
<evidence type="ECO:0000256" key="3">
    <source>
        <dbReference type="SAM" id="MobiDB-lite"/>
    </source>
</evidence>